<name>PCKG_MYCSM</name>
<organism>
    <name type="scientific">Mycolicibacterium smegmatis</name>
    <name type="common">Mycobacterium smegmatis</name>
    <dbReference type="NCBI Taxonomy" id="1772"/>
    <lineage>
        <taxon>Bacteria</taxon>
        <taxon>Bacillati</taxon>
        <taxon>Actinomycetota</taxon>
        <taxon>Actinomycetes</taxon>
        <taxon>Mycobacteriales</taxon>
        <taxon>Mycobacteriaceae</taxon>
        <taxon>Mycolicibacterium</taxon>
    </lineage>
</organism>
<keyword id="KW-0963">Cytoplasm</keyword>
<keyword id="KW-0210">Decarboxylase</keyword>
<keyword id="KW-0903">Direct protein sequencing</keyword>
<keyword id="KW-0312">Gluconeogenesis</keyword>
<keyword id="KW-0342">GTP-binding</keyword>
<keyword id="KW-0456">Lyase</keyword>
<keyword id="KW-0464">Manganese</keyword>
<keyword id="KW-0479">Metal-binding</keyword>
<keyword id="KW-0547">Nucleotide-binding</keyword>
<gene>
    <name type="primary">pckG</name>
    <name type="synonym">pck</name>
</gene>
<feature type="chain" id="PRO_0000103610" description="Phosphoenolpyruvate carboxykinase [GTP]">
    <location>
        <begin position="1"/>
        <end position="605"/>
    </location>
</feature>
<feature type="active site" evidence="1">
    <location>
        <position position="273"/>
    </location>
</feature>
<feature type="binding site" evidence="1">
    <location>
        <position position="81"/>
    </location>
    <ligand>
        <name>substrate</name>
    </ligand>
</feature>
<feature type="binding site" evidence="1">
    <location>
        <begin position="220"/>
        <end position="222"/>
    </location>
    <ligand>
        <name>substrate</name>
    </ligand>
</feature>
<feature type="binding site" evidence="1">
    <location>
        <position position="229"/>
    </location>
    <ligand>
        <name>Mn(2+)</name>
        <dbReference type="ChEBI" id="CHEBI:29035"/>
    </ligand>
</feature>
<feature type="binding site" evidence="1">
    <location>
        <position position="249"/>
    </location>
    <ligand>
        <name>Mn(2+)</name>
        <dbReference type="ChEBI" id="CHEBI:29035"/>
    </ligand>
</feature>
<feature type="binding site" evidence="1">
    <location>
        <position position="271"/>
    </location>
    <ligand>
        <name>substrate</name>
    </ligand>
</feature>
<feature type="binding site" evidence="1">
    <location>
        <begin position="272"/>
        <end position="277"/>
    </location>
    <ligand>
        <name>GTP</name>
        <dbReference type="ChEBI" id="CHEBI:37565"/>
    </ligand>
</feature>
<feature type="binding site" evidence="1">
    <location>
        <position position="296"/>
    </location>
    <ligand>
        <name>Mn(2+)</name>
        <dbReference type="ChEBI" id="CHEBI:29035"/>
    </ligand>
</feature>
<feature type="binding site" evidence="1">
    <location>
        <begin position="386"/>
        <end position="388"/>
    </location>
    <ligand>
        <name>substrate</name>
    </ligand>
</feature>
<feature type="binding site" evidence="1">
    <location>
        <position position="388"/>
    </location>
    <ligand>
        <name>GTP</name>
        <dbReference type="ChEBI" id="CHEBI:37565"/>
    </ligand>
</feature>
<feature type="binding site" evidence="1">
    <location>
        <position position="419"/>
    </location>
    <ligand>
        <name>GTP</name>
        <dbReference type="ChEBI" id="CHEBI:37565"/>
    </ligand>
</feature>
<feature type="binding site" evidence="1">
    <location>
        <begin position="514"/>
        <end position="517"/>
    </location>
    <ligand>
        <name>GTP</name>
        <dbReference type="ChEBI" id="CHEBI:37565"/>
    </ligand>
</feature>
<feature type="mutagenesis site" description="Significantly reduced carboxykinase activity. The affinity for Mn(2+), OAA and PEP decreases 9-, 2- and 3-fold compared to the wild-type, respectively." evidence="4">
    <original>D</original>
    <variation>A</variation>
    <location>
        <position position="75"/>
    </location>
</feature>
<feature type="mutagenesis site" description="Significantly reduced carboxykinase activity. The affinity for Mn(2+), OAA and PEP decreases 3.5-, 2.8- and 3-fold compared to the wild-type, respectively." evidence="4">
    <original>D</original>
    <variation>N</variation>
    <location>
        <position position="75"/>
    </location>
</feature>
<feature type="mutagenesis site" description="Significantly reduced carboxykinase activity. The affinity for PEP and OAA decreases 9- and 2-fold compared to the wild-type, respectively." evidence="4">
    <original>D</original>
    <variation>Q</variation>
    <location>
        <position position="75"/>
    </location>
</feature>
<feature type="mutagenesis site" description="Significantly reduced carboxykinase activity. The affinity for Mn(2+), OAA and PEP decreases 3-, 2- and 3-fold compared to the wild-type, respectively." evidence="4">
    <original>D</original>
    <variation>S</variation>
    <location>
        <position position="75"/>
    </location>
</feature>
<feature type="mutagenesis site" description="Exhibits a very low activity in either the OAA- or the PEP-forming direction. With Mn(2+) at 0.2 mM, the specific OAA-forming activity is 0.3% that of the wild-type. This value increases to 0.5%, when the Mn(2+) concentration raises to 2 mM. With Mn(2+) at 0.2 mM, the specific PEP-forming activity is 0.4% that of the wild-type." evidence="4">
    <original>D</original>
    <variation>A</variation>
    <location>
        <position position="78"/>
    </location>
</feature>
<feature type="mutagenesis site" description="Exhibits a very low activity in either the OAA- or the PEP-forming direction. With Mn(2+) at 0.2 mM, the specific OAA-forming activity is 0.9% that of the wild-type. This value increases to 3.4%, when the Mn(2+) concentration raises to 2 mM. With Mn(2+) at 0.2 mM, the specific PEP-forming activity is 2.3% that of the wild-type. The affinity for PEP is not significantly different from that of the wild-type, but the affinity for OAA and GDP decreases 2-fold." evidence="4">
    <original>E</original>
    <variation>A</variation>
    <location>
        <position position="83"/>
    </location>
</feature>
<comment type="function">
    <text evidence="2 4">Involved in the gluconeogenesis, in growth on fatty acids and is important for initiation of infection in the macrophages. Catalyzes the GTP-dependent conversion of oxaloacetate (OAA) to phosphoenolpyruvate (PEP), the rate-limiting step in the metabolic pathway that produces glucose from lactate and other precursors derived from the citric acid cycle. It can also use IDP or ADP, but with a lower activity.</text>
</comment>
<comment type="catalytic activity">
    <reaction evidence="2 4">
        <text>oxaloacetate + GTP = phosphoenolpyruvate + GDP + CO2</text>
        <dbReference type="Rhea" id="RHEA:10388"/>
        <dbReference type="ChEBI" id="CHEBI:16452"/>
        <dbReference type="ChEBI" id="CHEBI:16526"/>
        <dbReference type="ChEBI" id="CHEBI:37565"/>
        <dbReference type="ChEBI" id="CHEBI:58189"/>
        <dbReference type="ChEBI" id="CHEBI:58702"/>
        <dbReference type="EC" id="4.1.1.32"/>
    </reaction>
</comment>
<comment type="cofactor">
    <cofactor evidence="2 4">
        <name>Mn(2+)</name>
        <dbReference type="ChEBI" id="CHEBI:29035"/>
    </cofactor>
    <text evidence="2 4">Binds 1 Mn(2+) ion per subunit. Can also use Co(2+) ion.</text>
</comment>
<comment type="activity regulation">
    <text evidence="2">Inhibited by oxalate and by alpha-ketoglutarate. In vitro, the enzyme is stimulated by reducing agents such as dithiothreitol (DTT), reduced glutathione and 2-mercaptoethanol.</text>
</comment>
<comment type="biophysicochemical properties">
    <kinetics>
        <KM evidence="4">0.67 uM for OAA (PEP forming activity at pH 7.2 and 37 degrees Celsius)</KM>
        <KM evidence="4">3.3 uM for manganese (OAA forming activity at pH 7.2 and 37 degrees Celsius)</KM>
        <KM evidence="4">69 uM for GDP (OAA forming activity at pH 7.2 and 37 degrees Celsius)</KM>
        <KM evidence="2">132 uM for manganese (OAA forming activity without DTT at pH 7.2 and 37 degrees Celsius)</KM>
        <KM evidence="2">208 uM for cobalt (OAA forming activity without DTT at pH 7.2 and 37 degrees Celsius)</KM>
        <KM evidence="4">471 uM for PEP (OAA forming activity at pH 7.2 and 37 degrees Celsius)</KM>
        <Vmax evidence="4">8.6 umol/min/mg enzyme with manganese as substrate (OAA forming activity without DTT at pH 7.2 and 37 degrees Celsius)</Vmax>
        <Vmax evidence="4">9.5 umol/min/mg enzyme with cobalt as substrate (OAA forming activity without DTT at pH 7.2 and 37 degrees Celsius)</Vmax>
        <Vmax evidence="4">21.0 umol/min/mg enzyme with OAA as substrate (PEP forming activity at pH 7.2 and 37 degrees Celsius)</Vmax>
        <Vmax evidence="4">32.0 umol/min/mg enzyme with manganese as substrate (OAA forming activity at pH 7.2 and 37 degrees Celsius)</Vmax>
        <Vmax evidence="4">33.6 umol/min/mg enzyme with GDP as substrate (OAA forming activity at pH 7.2 and 37 degrees Celsius)</Vmax>
        <Vmax evidence="4">38.2 umol/min/mg enzyme with PEP as substrate (OAA forming activity at pH 7.2 and 37 degrees Celsius)</Vmax>
    </kinetics>
    <phDependence>
        <text evidence="2">Optimum pH is between 7 and 7.4.</text>
    </phDependence>
    <temperatureDependence>
        <text evidence="2">Optimum temperature is 70 degrees Celsius.</text>
    </temperatureDependence>
</comment>
<comment type="pathway">
    <text evidence="7">Carbohydrate biosynthesis; gluconeogenesis.</text>
</comment>
<comment type="subunit">
    <text evidence="2">Monomer.</text>
</comment>
<comment type="subcellular location">
    <subcellularLocation>
        <location evidence="7">Cytoplasm</location>
    </subcellularLocation>
</comment>
<comment type="mass spectrometry"/>
<comment type="disruption phenotype">
    <text evidence="3">Cells lacking this gene are inhibited when they grow on acetate and palmitate.</text>
</comment>
<comment type="similarity">
    <text evidence="7">Belongs to the phosphoenolpyruvate carboxykinase [GTP] family.</text>
</comment>
<proteinExistence type="evidence at protein level"/>
<accession>Q9AGJ6</accession>
<reference key="1">
    <citation type="journal article" date="2001" name="J. Biol. Chem.">
        <title>A GTP-dependent vertebrate-type phosphoenolpyruvate carboxykinase from Mycobacterium smegmatis.</title>
        <authorList>
            <person name="Mukhopadhyay B."/>
            <person name="Concar E.M."/>
            <person name="Wolfe R.S."/>
        </authorList>
    </citation>
    <scope>NUCLEOTIDE SEQUENCE [GENOMIC DNA]</scope>
    <scope>PROTEIN SEQUENCE OF 1-13</scope>
    <scope>FUNCTION</scope>
    <scope>CATALYTIC ACTIVITY</scope>
    <scope>BIOPHYSICOCHEMICAL PROPERTIES</scope>
    <scope>ACTIVITY REGULATION</scope>
    <scope>COFACTOR</scope>
    <scope>MASS SPECTROMETRY</scope>
    <scope>SUBUNIT</scope>
    <scope>SUBSTRATE SPECIFICITY</scope>
</reference>
<reference key="2">
    <citation type="journal article" date="2003" name="Microbiology">
        <title>pckA-deficient Mycobacterium bovis BCG shows attenuated virulence in mice and in macrophages.</title>
        <authorList>
            <person name="Liu K."/>
            <person name="Yu J."/>
            <person name="Russell D.G."/>
        </authorList>
    </citation>
    <scope>DISRUPTION PHENOTYPE</scope>
</reference>
<reference key="3">
    <citation type="journal article" date="2006" name="J. Biol. Chem.">
        <title>Roles of Asp75, Asp78, and Glu83 of GTP-dependent phosphoenolpyruvate carboxykinase from Mycobacterium smegmatis.</title>
        <authorList>
            <person name="Case C.L."/>
            <person name="Concar E.M."/>
            <person name="Boswell K.L."/>
            <person name="Mukhopadhyay B."/>
        </authorList>
    </citation>
    <scope>FUNCTION</scope>
    <scope>CATALYTIC ACTIVITY</scope>
    <scope>BIOPHYSICOCHEMICAL PROPERTIES</scope>
    <scope>MUTAGENESIS OF ASP-75; ASP-78 AND GLU-83</scope>
    <scope>COFACTOR</scope>
</reference>
<sequence>MTSATIPGLDTAPTKHQGLLAWVQEVAELTQPDRVVFADGSDEEYERLCAHLVEAGTFQKLNPEKQPNSYLALSDPSDVARVESRTFICTEREIDAGPTNNWMDPAEMRGIMTDLYRGSMRGRTLYVVPFCMGPLDAEDPKLGVEITDSEYVVVSMRTMTRMGRAALDKLGDDGFFVKALHSIGAPLEPGQKDVPWPCNDTKYITHFPETREIWSFGSGYGGNALLGKKCYSLRIASAMAHDEGWLAEHMLILKLISPENKAYFIAAAFPSACGKTNLAMLQPTIEGWRAETVGDDIAWMRFGKDGRLYATNPEFGFFGVAPGTNWSSNPNAMKTIAAGNTVFTNVAKTDDGDVWWEGLEGDPQHLIDWKGNDWTPESGEKAAHPNSRYCTPISQCPTLAPEWDDPQGVPISAILFGGRRKTTVPLITEARDWQHGVFIGATLGSEQTAAAEGKVGTVRRDPMAMLPFLGYNVGDYFAHWINVGKNADESKLPKVFFVNWFRRGDDGRFLWPGFGENSRVLKWAVERIEHKADGKSTPIGIVPTAADLDLEGLDVDPADVDEALAVKPEEWRAELPLIEEWFEFVGEKLPTGLKDEFDALKERLG</sequence>
<dbReference type="EC" id="4.1.1.32" evidence="1 2 4"/>
<dbReference type="EMBL" id="AF332191">
    <property type="protein sequence ID" value="AAK28534.1"/>
    <property type="molecule type" value="Genomic_DNA"/>
</dbReference>
<dbReference type="SMR" id="Q9AGJ6"/>
<dbReference type="BRENDA" id="4.1.1.32">
    <property type="organism ID" value="3512"/>
</dbReference>
<dbReference type="SABIO-RK" id="Q9AGJ6"/>
<dbReference type="UniPathway" id="UPA00138"/>
<dbReference type="GO" id="GO:0005829">
    <property type="term" value="C:cytosol"/>
    <property type="evidence" value="ECO:0007669"/>
    <property type="project" value="TreeGrafter"/>
</dbReference>
<dbReference type="GO" id="GO:0005525">
    <property type="term" value="F:GTP binding"/>
    <property type="evidence" value="ECO:0007669"/>
    <property type="project" value="UniProtKB-UniRule"/>
</dbReference>
<dbReference type="GO" id="GO:0030145">
    <property type="term" value="F:manganese ion binding"/>
    <property type="evidence" value="ECO:0007669"/>
    <property type="project" value="UniProtKB-UniRule"/>
</dbReference>
<dbReference type="GO" id="GO:0004613">
    <property type="term" value="F:phosphoenolpyruvate carboxykinase (GTP) activity"/>
    <property type="evidence" value="ECO:0007669"/>
    <property type="project" value="UniProtKB-UniRule"/>
</dbReference>
<dbReference type="GO" id="GO:0071333">
    <property type="term" value="P:cellular response to glucose stimulus"/>
    <property type="evidence" value="ECO:0007669"/>
    <property type="project" value="TreeGrafter"/>
</dbReference>
<dbReference type="GO" id="GO:0006094">
    <property type="term" value="P:gluconeogenesis"/>
    <property type="evidence" value="ECO:0007669"/>
    <property type="project" value="UniProtKB-UniRule"/>
</dbReference>
<dbReference type="GO" id="GO:0046327">
    <property type="term" value="P:glycerol biosynthetic process from pyruvate"/>
    <property type="evidence" value="ECO:0007669"/>
    <property type="project" value="TreeGrafter"/>
</dbReference>
<dbReference type="GO" id="GO:0006107">
    <property type="term" value="P:oxaloacetate metabolic process"/>
    <property type="evidence" value="ECO:0007669"/>
    <property type="project" value="TreeGrafter"/>
</dbReference>
<dbReference type="GO" id="GO:0019543">
    <property type="term" value="P:propionate catabolic process"/>
    <property type="evidence" value="ECO:0007669"/>
    <property type="project" value="TreeGrafter"/>
</dbReference>
<dbReference type="GO" id="GO:0033993">
    <property type="term" value="P:response to lipid"/>
    <property type="evidence" value="ECO:0007669"/>
    <property type="project" value="TreeGrafter"/>
</dbReference>
<dbReference type="GO" id="GO:0042594">
    <property type="term" value="P:response to starvation"/>
    <property type="evidence" value="ECO:0007669"/>
    <property type="project" value="TreeGrafter"/>
</dbReference>
<dbReference type="CDD" id="cd00819">
    <property type="entry name" value="PEPCK_GTP"/>
    <property type="match status" value="1"/>
</dbReference>
<dbReference type="FunFam" id="3.40.449.10:FF:000005">
    <property type="entry name" value="Phosphoenolpyruvate carboxykinase [GTP]"/>
    <property type="match status" value="1"/>
</dbReference>
<dbReference type="Gene3D" id="3.90.228.20">
    <property type="match status" value="1"/>
</dbReference>
<dbReference type="Gene3D" id="3.40.449.10">
    <property type="entry name" value="Phosphoenolpyruvate Carboxykinase, domain 1"/>
    <property type="match status" value="1"/>
</dbReference>
<dbReference type="Gene3D" id="2.170.8.10">
    <property type="entry name" value="Phosphoenolpyruvate Carboxykinase, domain 2"/>
    <property type="match status" value="1"/>
</dbReference>
<dbReference type="HAMAP" id="MF_00452">
    <property type="entry name" value="PEPCK_GTP"/>
    <property type="match status" value="1"/>
</dbReference>
<dbReference type="InterPro" id="IPR018091">
    <property type="entry name" value="PEP_carboxykin_GTP_CS"/>
</dbReference>
<dbReference type="InterPro" id="IPR013035">
    <property type="entry name" value="PEP_carboxykinase_C"/>
</dbReference>
<dbReference type="InterPro" id="IPR008209">
    <property type="entry name" value="PEP_carboxykinase_GTP"/>
</dbReference>
<dbReference type="InterPro" id="IPR035077">
    <property type="entry name" value="PEP_carboxykinase_GTP_C"/>
</dbReference>
<dbReference type="InterPro" id="IPR035078">
    <property type="entry name" value="PEP_carboxykinase_GTP_N"/>
</dbReference>
<dbReference type="InterPro" id="IPR008210">
    <property type="entry name" value="PEP_carboxykinase_N"/>
</dbReference>
<dbReference type="NCBIfam" id="NF003253">
    <property type="entry name" value="PRK04210.1"/>
    <property type="match status" value="1"/>
</dbReference>
<dbReference type="PANTHER" id="PTHR11561">
    <property type="entry name" value="PHOSPHOENOLPYRUVATE CARBOXYKINASE"/>
    <property type="match status" value="1"/>
</dbReference>
<dbReference type="PANTHER" id="PTHR11561:SF0">
    <property type="entry name" value="PHOSPHOENOLPYRUVATE CARBOXYKINASE [GTP]-RELATED"/>
    <property type="match status" value="1"/>
</dbReference>
<dbReference type="Pfam" id="PF00821">
    <property type="entry name" value="PEPCK_GTP"/>
    <property type="match status" value="1"/>
</dbReference>
<dbReference type="Pfam" id="PF17297">
    <property type="entry name" value="PEPCK_N"/>
    <property type="match status" value="1"/>
</dbReference>
<dbReference type="PIRSF" id="PIRSF001348">
    <property type="entry name" value="PEP_carboxykinase_GTP"/>
    <property type="match status" value="1"/>
</dbReference>
<dbReference type="SUPFAM" id="SSF68923">
    <property type="entry name" value="PEP carboxykinase N-terminal domain"/>
    <property type="match status" value="1"/>
</dbReference>
<dbReference type="SUPFAM" id="SSF53795">
    <property type="entry name" value="PEP carboxykinase-like"/>
    <property type="match status" value="1"/>
</dbReference>
<dbReference type="PROSITE" id="PS00505">
    <property type="entry name" value="PEPCK_GTP"/>
    <property type="match status" value="1"/>
</dbReference>
<protein>
    <recommendedName>
        <fullName evidence="1 5">Phosphoenolpyruvate carboxykinase [GTP]</fullName>
        <shortName evidence="1 5">PEP carboxykinase</shortName>
        <shortName evidence="1 5">PEPCK</shortName>
        <ecNumber evidence="1 2 4">4.1.1.32</ecNumber>
    </recommendedName>
    <alternativeName>
        <fullName evidence="6">GTP-dependent phosphoenolpyruvate carboxykinase</fullName>
        <shortName evidence="6">GTP-PEPCK</shortName>
    </alternativeName>
</protein>
<evidence type="ECO:0000255" key="1">
    <source>
        <dbReference type="HAMAP-Rule" id="MF_00452"/>
    </source>
</evidence>
<evidence type="ECO:0000269" key="2">
    <source>
    </source>
</evidence>
<evidence type="ECO:0000269" key="3">
    <source>
    </source>
</evidence>
<evidence type="ECO:0000269" key="4">
    <source>
    </source>
</evidence>
<evidence type="ECO:0000303" key="5">
    <source>
    </source>
</evidence>
<evidence type="ECO:0000303" key="6">
    <source>
    </source>
</evidence>
<evidence type="ECO:0000305" key="7"/>